<comment type="function">
    <text evidence="1">Catalyzes the radical-mediated synthesis of 7,8-didemethyl-8-hydroxy-5-deazariboflavin from 5-amino-5-(4-hydroxybenzyl)-6-(D-ribitylimino)-5,6-dihydrouracil.</text>
</comment>
<comment type="catalytic activity">
    <reaction evidence="1">
        <text>5-amino-5-(4-hydroxybenzyl)-6-(D-ribitylimino)-5,6-dihydrouracil + S-adenosyl-L-methionine = 7,8-didemethyl-8-hydroxy-5-deazariboflavin + 5'-deoxyadenosine + L-methionine + NH4(+) + H(+)</text>
        <dbReference type="Rhea" id="RHEA:55204"/>
        <dbReference type="ChEBI" id="CHEBI:15378"/>
        <dbReference type="ChEBI" id="CHEBI:17319"/>
        <dbReference type="ChEBI" id="CHEBI:28938"/>
        <dbReference type="ChEBI" id="CHEBI:57844"/>
        <dbReference type="ChEBI" id="CHEBI:59789"/>
        <dbReference type="ChEBI" id="CHEBI:59904"/>
        <dbReference type="ChEBI" id="CHEBI:85936"/>
        <dbReference type="EC" id="4.3.1.32"/>
    </reaction>
</comment>
<comment type="cofactor">
    <cofactor evidence="1">
        <name>[4Fe-4S] cluster</name>
        <dbReference type="ChEBI" id="CHEBI:49883"/>
    </cofactor>
    <text evidence="1">Binds 1 [4Fe-4S] cluster. The cluster is coordinated with 3 cysteines and an exchangeable S-adenosyl-L-methionine.</text>
</comment>
<comment type="pathway">
    <text evidence="1">Cofactor biosynthesis; coenzyme F0 biosynthesis.</text>
</comment>
<comment type="subunit">
    <text evidence="1">Consists of two subunits, CofG and CofH.</text>
</comment>
<comment type="similarity">
    <text evidence="1">Belongs to the radical SAM superfamily. CofG family.</text>
</comment>
<comment type="sequence caution" evidence="3">
    <conflict type="erroneous initiation">
        <sequence resource="EMBL-CDS" id="CAF30432"/>
    </conflict>
</comment>
<gene>
    <name evidence="1" type="primary">cofG</name>
    <name type="ordered locus">MMP0876</name>
</gene>
<proteinExistence type="inferred from homology"/>
<organism>
    <name type="scientific">Methanococcus maripaludis (strain DSM 14266 / JCM 13030 / NBRC 101832 / S2 / LL)</name>
    <dbReference type="NCBI Taxonomy" id="267377"/>
    <lineage>
        <taxon>Archaea</taxon>
        <taxon>Methanobacteriati</taxon>
        <taxon>Methanobacteriota</taxon>
        <taxon>Methanomada group</taxon>
        <taxon>Methanococci</taxon>
        <taxon>Methanococcales</taxon>
        <taxon>Methanococcaceae</taxon>
        <taxon>Methanococcus</taxon>
    </lineage>
</organism>
<evidence type="ECO:0000255" key="1">
    <source>
        <dbReference type="HAMAP-Rule" id="MF_01611"/>
    </source>
</evidence>
<evidence type="ECO:0000255" key="2">
    <source>
        <dbReference type="PROSITE-ProRule" id="PRU01266"/>
    </source>
</evidence>
<evidence type="ECO:0000305" key="3"/>
<protein>
    <recommendedName>
        <fullName evidence="1">7,8-didemethyl-8-hydroxy-5-deazariboflavin synthase</fullName>
        <ecNumber evidence="1">4.3.1.32</ecNumber>
    </recommendedName>
    <alternativeName>
        <fullName evidence="1">FO synthase subunit 1</fullName>
    </alternativeName>
</protein>
<dbReference type="EC" id="4.3.1.32" evidence="1"/>
<dbReference type="EMBL" id="BX950229">
    <property type="protein sequence ID" value="CAF30432.1"/>
    <property type="status" value="ALT_INIT"/>
    <property type="molecule type" value="Genomic_DNA"/>
</dbReference>
<dbReference type="SMR" id="Q6LYV9"/>
<dbReference type="STRING" id="267377.MMP0876"/>
<dbReference type="EnsemblBacteria" id="CAF30432">
    <property type="protein sequence ID" value="CAF30432"/>
    <property type="gene ID" value="MMP0876"/>
</dbReference>
<dbReference type="KEGG" id="mmp:MMP0876"/>
<dbReference type="PATRIC" id="fig|267377.15.peg.902"/>
<dbReference type="eggNOG" id="arCOG00657">
    <property type="taxonomic scope" value="Archaea"/>
</dbReference>
<dbReference type="HOGENOM" id="CLU_054174_0_0_2"/>
<dbReference type="UniPathway" id="UPA00072"/>
<dbReference type="Proteomes" id="UP000000590">
    <property type="component" value="Chromosome"/>
</dbReference>
<dbReference type="GO" id="GO:0051539">
    <property type="term" value="F:4 iron, 4 sulfur cluster binding"/>
    <property type="evidence" value="ECO:0007669"/>
    <property type="project" value="UniProtKB-KW"/>
</dbReference>
<dbReference type="GO" id="GO:0044689">
    <property type="term" value="F:7,8-didemethyl-8-hydroxy-5-deazariboflavin synthase activity"/>
    <property type="evidence" value="ECO:0007669"/>
    <property type="project" value="UniProtKB-EC"/>
</dbReference>
<dbReference type="GO" id="GO:0005506">
    <property type="term" value="F:iron ion binding"/>
    <property type="evidence" value="ECO:0007669"/>
    <property type="project" value="UniProtKB-UniRule"/>
</dbReference>
<dbReference type="GO" id="GO:0016765">
    <property type="term" value="F:transferase activity, transferring alkyl or aryl (other than methyl) groups"/>
    <property type="evidence" value="ECO:0007669"/>
    <property type="project" value="InterPro"/>
</dbReference>
<dbReference type="CDD" id="cd01335">
    <property type="entry name" value="Radical_SAM"/>
    <property type="match status" value="1"/>
</dbReference>
<dbReference type="Gene3D" id="3.20.20.70">
    <property type="entry name" value="Aldolase class I"/>
    <property type="match status" value="1"/>
</dbReference>
<dbReference type="HAMAP" id="MF_01611">
    <property type="entry name" value="FO_synth_sub1"/>
    <property type="match status" value="1"/>
</dbReference>
<dbReference type="InterPro" id="IPR013785">
    <property type="entry name" value="Aldolase_TIM"/>
</dbReference>
<dbReference type="InterPro" id="IPR019939">
    <property type="entry name" value="CofG_family"/>
</dbReference>
<dbReference type="InterPro" id="IPR006638">
    <property type="entry name" value="Elp3/MiaA/NifB-like_rSAM"/>
</dbReference>
<dbReference type="InterPro" id="IPR034405">
    <property type="entry name" value="F420"/>
</dbReference>
<dbReference type="InterPro" id="IPR007197">
    <property type="entry name" value="rSAM"/>
</dbReference>
<dbReference type="NCBIfam" id="TIGR03550">
    <property type="entry name" value="F420_cofG"/>
    <property type="match status" value="1"/>
</dbReference>
<dbReference type="NCBIfam" id="NF004884">
    <property type="entry name" value="PRK06245.1"/>
    <property type="match status" value="1"/>
</dbReference>
<dbReference type="PANTHER" id="PTHR43076:SF15">
    <property type="entry name" value="7,8-DIDEMETHYL-8-HYDROXY-5-DEAZARIBOFLAVIN SYNTHASE"/>
    <property type="match status" value="1"/>
</dbReference>
<dbReference type="PANTHER" id="PTHR43076">
    <property type="entry name" value="FO SYNTHASE (COFH)"/>
    <property type="match status" value="1"/>
</dbReference>
<dbReference type="Pfam" id="PF04055">
    <property type="entry name" value="Radical_SAM"/>
    <property type="match status" value="1"/>
</dbReference>
<dbReference type="SFLD" id="SFLDF00294">
    <property type="entry name" value="7_8-didemethyl-8-hydroxy-5-dea"/>
    <property type="match status" value="1"/>
</dbReference>
<dbReference type="SFLD" id="SFLDG01064">
    <property type="entry name" value="F420__menaquinone_cofactor_bio"/>
    <property type="match status" value="1"/>
</dbReference>
<dbReference type="SMART" id="SM00729">
    <property type="entry name" value="Elp3"/>
    <property type="match status" value="1"/>
</dbReference>
<dbReference type="SUPFAM" id="SSF102114">
    <property type="entry name" value="Radical SAM enzymes"/>
    <property type="match status" value="1"/>
</dbReference>
<dbReference type="PROSITE" id="PS51918">
    <property type="entry name" value="RADICAL_SAM"/>
    <property type="match status" value="1"/>
</dbReference>
<reference key="1">
    <citation type="journal article" date="2004" name="J. Bacteriol.">
        <title>Complete genome sequence of the genetically tractable hydrogenotrophic methanogen Methanococcus maripaludis.</title>
        <authorList>
            <person name="Hendrickson E.L."/>
            <person name="Kaul R."/>
            <person name="Zhou Y."/>
            <person name="Bovee D."/>
            <person name="Chapman P."/>
            <person name="Chung J."/>
            <person name="Conway de Macario E."/>
            <person name="Dodsworth J.A."/>
            <person name="Gillett W."/>
            <person name="Graham D.E."/>
            <person name="Hackett M."/>
            <person name="Haydock A.K."/>
            <person name="Kang A."/>
            <person name="Land M.L."/>
            <person name="Levy R."/>
            <person name="Lie T.J."/>
            <person name="Major T.A."/>
            <person name="Moore B.C."/>
            <person name="Porat I."/>
            <person name="Palmeiri A."/>
            <person name="Rouse G."/>
            <person name="Saenphimmachak C."/>
            <person name="Soell D."/>
            <person name="Van Dien S."/>
            <person name="Wang T."/>
            <person name="Whitman W.B."/>
            <person name="Xia Q."/>
            <person name="Zhang Y."/>
            <person name="Larimer F.W."/>
            <person name="Olson M.V."/>
            <person name="Leigh J.A."/>
        </authorList>
    </citation>
    <scope>NUCLEOTIDE SEQUENCE [LARGE SCALE GENOMIC DNA]</scope>
    <source>
        <strain>DSM 14266 / JCM 13030 / NBRC 101832 / S2 / LL</strain>
    </source>
</reference>
<sequence length="330" mass="38039">MGKINAENTSKHVTFSKNAFIPVCNWCRNVCGYCTFRNENFKLLKMDEMKEILTKADTFGCREALFTFGENVDENEKVKEELKKMGYSGILEYLYEISAWCLENTNLIPHTNCGILSYDELKYLREVNASMGLMLENSSARLCGTIAHEKSPGKDPKLRIEMIENAGKLKIPFTTGILIGIGETFEERVNSIFEIKRIHEKYGHIQEVIVQNFRSKPQIPMENYKEPSPVEMFKMIILSKLILEDISIQVPPNLNRETGQLFLMAGIDDWGGVSPLTKDFVNPEAPWPDIEELNIFSKELGFTLKERLPVYEKYITEEWVDKKILEKIKK</sequence>
<name>COFG_METMP</name>
<feature type="chain" id="PRO_0000147767" description="7,8-didemethyl-8-hydroxy-5-deazariboflavin synthase">
    <location>
        <begin position="1"/>
        <end position="330"/>
    </location>
</feature>
<feature type="domain" description="Radical SAM core" evidence="2">
    <location>
        <begin position="13"/>
        <end position="253"/>
    </location>
</feature>
<feature type="binding site" evidence="1">
    <location>
        <position position="27"/>
    </location>
    <ligand>
        <name>[4Fe-4S] cluster</name>
        <dbReference type="ChEBI" id="CHEBI:49883"/>
        <note>4Fe-4S-S-AdoMet</note>
    </ligand>
</feature>
<feature type="binding site" evidence="1">
    <location>
        <position position="31"/>
    </location>
    <ligand>
        <name>[4Fe-4S] cluster</name>
        <dbReference type="ChEBI" id="CHEBI:49883"/>
        <note>4Fe-4S-S-AdoMet</note>
    </ligand>
</feature>
<feature type="binding site" evidence="1">
    <location>
        <position position="34"/>
    </location>
    <ligand>
        <name>[4Fe-4S] cluster</name>
        <dbReference type="ChEBI" id="CHEBI:49883"/>
        <note>4Fe-4S-S-AdoMet</note>
    </ligand>
</feature>
<accession>Q6LYV9</accession>
<keyword id="KW-0004">4Fe-4S</keyword>
<keyword id="KW-0408">Iron</keyword>
<keyword id="KW-0411">Iron-sulfur</keyword>
<keyword id="KW-0456">Lyase</keyword>
<keyword id="KW-0479">Metal-binding</keyword>
<keyword id="KW-1185">Reference proteome</keyword>
<keyword id="KW-0949">S-adenosyl-L-methionine</keyword>